<organism>
    <name type="scientific">Escherichia coli O8 (strain IAI1)</name>
    <dbReference type="NCBI Taxonomy" id="585034"/>
    <lineage>
        <taxon>Bacteria</taxon>
        <taxon>Pseudomonadati</taxon>
        <taxon>Pseudomonadota</taxon>
        <taxon>Gammaproteobacteria</taxon>
        <taxon>Enterobacterales</taxon>
        <taxon>Enterobacteriaceae</taxon>
        <taxon>Escherichia</taxon>
    </lineage>
</organism>
<keyword id="KW-0001">2Fe-2S</keyword>
<keyword id="KW-0004">4Fe-4S</keyword>
<keyword id="KW-0093">Biotin biosynthesis</keyword>
<keyword id="KW-0408">Iron</keyword>
<keyword id="KW-0411">Iron-sulfur</keyword>
<keyword id="KW-0479">Metal-binding</keyword>
<keyword id="KW-0949">S-adenosyl-L-methionine</keyword>
<keyword id="KW-0808">Transferase</keyword>
<comment type="function">
    <text evidence="1">Catalyzes the conversion of dethiobiotin (DTB) to biotin by the insertion of a sulfur atom into dethiobiotin via a radical-based mechanism.</text>
</comment>
<comment type="catalytic activity">
    <reaction evidence="1">
        <text>(4R,5S)-dethiobiotin + (sulfur carrier)-SH + 2 reduced [2Fe-2S]-[ferredoxin] + 2 S-adenosyl-L-methionine = (sulfur carrier)-H + biotin + 2 5'-deoxyadenosine + 2 L-methionine + 2 oxidized [2Fe-2S]-[ferredoxin]</text>
        <dbReference type="Rhea" id="RHEA:22060"/>
        <dbReference type="Rhea" id="RHEA-COMP:10000"/>
        <dbReference type="Rhea" id="RHEA-COMP:10001"/>
        <dbReference type="Rhea" id="RHEA-COMP:14737"/>
        <dbReference type="Rhea" id="RHEA-COMP:14739"/>
        <dbReference type="ChEBI" id="CHEBI:17319"/>
        <dbReference type="ChEBI" id="CHEBI:29917"/>
        <dbReference type="ChEBI" id="CHEBI:33737"/>
        <dbReference type="ChEBI" id="CHEBI:33738"/>
        <dbReference type="ChEBI" id="CHEBI:57586"/>
        <dbReference type="ChEBI" id="CHEBI:57844"/>
        <dbReference type="ChEBI" id="CHEBI:59789"/>
        <dbReference type="ChEBI" id="CHEBI:64428"/>
        <dbReference type="ChEBI" id="CHEBI:149473"/>
        <dbReference type="EC" id="2.8.1.6"/>
    </reaction>
</comment>
<comment type="cofactor">
    <cofactor evidence="1">
        <name>[4Fe-4S] cluster</name>
        <dbReference type="ChEBI" id="CHEBI:49883"/>
    </cofactor>
    <text evidence="1">Binds 1 [4Fe-4S] cluster. The cluster is coordinated with 3 cysteines and an exchangeable S-adenosyl-L-methionine.</text>
</comment>
<comment type="cofactor">
    <cofactor evidence="1">
        <name>[2Fe-2S] cluster</name>
        <dbReference type="ChEBI" id="CHEBI:190135"/>
    </cofactor>
    <text evidence="1">Binds 1 [2Fe-2S] cluster. The cluster is coordinated with 3 cysteines and 1 arginine.</text>
</comment>
<comment type="pathway">
    <text evidence="1">Cofactor biosynthesis; biotin biosynthesis; biotin from 7,8-diaminononanoate: step 2/2.</text>
</comment>
<comment type="subunit">
    <text evidence="1">Homodimer.</text>
</comment>
<comment type="similarity">
    <text evidence="1">Belongs to the radical SAM superfamily. Biotin synthase family.</text>
</comment>
<feature type="chain" id="PRO_0000381363" description="Biotin synthase">
    <location>
        <begin position="1"/>
        <end position="346"/>
    </location>
</feature>
<feature type="domain" description="Radical SAM core" evidence="2">
    <location>
        <begin position="38"/>
        <end position="256"/>
    </location>
</feature>
<feature type="binding site" evidence="1">
    <location>
        <position position="53"/>
    </location>
    <ligand>
        <name>[4Fe-4S] cluster</name>
        <dbReference type="ChEBI" id="CHEBI:49883"/>
        <note>4Fe-4S-S-AdoMet</note>
    </ligand>
</feature>
<feature type="binding site" evidence="1">
    <location>
        <position position="57"/>
    </location>
    <ligand>
        <name>[4Fe-4S] cluster</name>
        <dbReference type="ChEBI" id="CHEBI:49883"/>
        <note>4Fe-4S-S-AdoMet</note>
    </ligand>
</feature>
<feature type="binding site" evidence="1">
    <location>
        <position position="60"/>
    </location>
    <ligand>
        <name>[4Fe-4S] cluster</name>
        <dbReference type="ChEBI" id="CHEBI:49883"/>
        <note>4Fe-4S-S-AdoMet</note>
    </ligand>
</feature>
<feature type="binding site" evidence="1">
    <location>
        <position position="97"/>
    </location>
    <ligand>
        <name>[2Fe-2S] cluster</name>
        <dbReference type="ChEBI" id="CHEBI:190135"/>
    </ligand>
</feature>
<feature type="binding site" evidence="1">
    <location>
        <position position="128"/>
    </location>
    <ligand>
        <name>[2Fe-2S] cluster</name>
        <dbReference type="ChEBI" id="CHEBI:190135"/>
    </ligand>
</feature>
<feature type="binding site" evidence="1">
    <location>
        <position position="188"/>
    </location>
    <ligand>
        <name>[2Fe-2S] cluster</name>
        <dbReference type="ChEBI" id="CHEBI:190135"/>
    </ligand>
</feature>
<feature type="binding site" evidence="1">
    <location>
        <position position="260"/>
    </location>
    <ligand>
        <name>[2Fe-2S] cluster</name>
        <dbReference type="ChEBI" id="CHEBI:190135"/>
    </ligand>
</feature>
<proteinExistence type="inferred from homology"/>
<evidence type="ECO:0000255" key="1">
    <source>
        <dbReference type="HAMAP-Rule" id="MF_01694"/>
    </source>
</evidence>
<evidence type="ECO:0000255" key="2">
    <source>
        <dbReference type="PROSITE-ProRule" id="PRU01266"/>
    </source>
</evidence>
<name>BIOB_ECO8A</name>
<dbReference type="EC" id="2.8.1.6" evidence="1"/>
<dbReference type="EMBL" id="CU928160">
    <property type="protein sequence ID" value="CAQ97675.1"/>
    <property type="molecule type" value="Genomic_DNA"/>
</dbReference>
<dbReference type="RefSeq" id="WP_000951213.1">
    <property type="nucleotide sequence ID" value="NC_011741.1"/>
</dbReference>
<dbReference type="SMR" id="B7M747"/>
<dbReference type="GeneID" id="93776655"/>
<dbReference type="KEGG" id="ecr:ECIAI1_0810"/>
<dbReference type="HOGENOM" id="CLU_033172_1_2_6"/>
<dbReference type="UniPathway" id="UPA00078">
    <property type="reaction ID" value="UER00162"/>
</dbReference>
<dbReference type="GO" id="GO:0051537">
    <property type="term" value="F:2 iron, 2 sulfur cluster binding"/>
    <property type="evidence" value="ECO:0007669"/>
    <property type="project" value="UniProtKB-KW"/>
</dbReference>
<dbReference type="GO" id="GO:0051539">
    <property type="term" value="F:4 iron, 4 sulfur cluster binding"/>
    <property type="evidence" value="ECO:0007669"/>
    <property type="project" value="UniProtKB-KW"/>
</dbReference>
<dbReference type="GO" id="GO:0004076">
    <property type="term" value="F:biotin synthase activity"/>
    <property type="evidence" value="ECO:0007669"/>
    <property type="project" value="UniProtKB-UniRule"/>
</dbReference>
<dbReference type="GO" id="GO:0005506">
    <property type="term" value="F:iron ion binding"/>
    <property type="evidence" value="ECO:0007669"/>
    <property type="project" value="UniProtKB-UniRule"/>
</dbReference>
<dbReference type="GO" id="GO:0009102">
    <property type="term" value="P:biotin biosynthetic process"/>
    <property type="evidence" value="ECO:0007669"/>
    <property type="project" value="UniProtKB-UniRule"/>
</dbReference>
<dbReference type="CDD" id="cd01335">
    <property type="entry name" value="Radical_SAM"/>
    <property type="match status" value="1"/>
</dbReference>
<dbReference type="FunFam" id="3.20.20.70:FF:000011">
    <property type="entry name" value="Biotin synthase"/>
    <property type="match status" value="1"/>
</dbReference>
<dbReference type="Gene3D" id="3.20.20.70">
    <property type="entry name" value="Aldolase class I"/>
    <property type="match status" value="1"/>
</dbReference>
<dbReference type="HAMAP" id="MF_01694">
    <property type="entry name" value="BioB"/>
    <property type="match status" value="1"/>
</dbReference>
<dbReference type="InterPro" id="IPR013785">
    <property type="entry name" value="Aldolase_TIM"/>
</dbReference>
<dbReference type="InterPro" id="IPR010722">
    <property type="entry name" value="BATS_dom"/>
</dbReference>
<dbReference type="InterPro" id="IPR002684">
    <property type="entry name" value="Biotin_synth/BioAB"/>
</dbReference>
<dbReference type="InterPro" id="IPR024177">
    <property type="entry name" value="Biotin_synthase"/>
</dbReference>
<dbReference type="InterPro" id="IPR006638">
    <property type="entry name" value="Elp3/MiaA/NifB-like_rSAM"/>
</dbReference>
<dbReference type="InterPro" id="IPR007197">
    <property type="entry name" value="rSAM"/>
</dbReference>
<dbReference type="NCBIfam" id="TIGR00433">
    <property type="entry name" value="bioB"/>
    <property type="match status" value="1"/>
</dbReference>
<dbReference type="PANTHER" id="PTHR22976">
    <property type="entry name" value="BIOTIN SYNTHASE"/>
    <property type="match status" value="1"/>
</dbReference>
<dbReference type="PANTHER" id="PTHR22976:SF2">
    <property type="entry name" value="BIOTIN SYNTHASE, MITOCHONDRIAL"/>
    <property type="match status" value="1"/>
</dbReference>
<dbReference type="Pfam" id="PF06968">
    <property type="entry name" value="BATS"/>
    <property type="match status" value="1"/>
</dbReference>
<dbReference type="Pfam" id="PF04055">
    <property type="entry name" value="Radical_SAM"/>
    <property type="match status" value="1"/>
</dbReference>
<dbReference type="PIRSF" id="PIRSF001619">
    <property type="entry name" value="Biotin_synth"/>
    <property type="match status" value="1"/>
</dbReference>
<dbReference type="SFLD" id="SFLDG01060">
    <property type="entry name" value="BATS_domain_containing"/>
    <property type="match status" value="1"/>
</dbReference>
<dbReference type="SFLD" id="SFLDF00272">
    <property type="entry name" value="biotin_synthase"/>
    <property type="match status" value="1"/>
</dbReference>
<dbReference type="SMART" id="SM00876">
    <property type="entry name" value="BATS"/>
    <property type="match status" value="1"/>
</dbReference>
<dbReference type="SMART" id="SM00729">
    <property type="entry name" value="Elp3"/>
    <property type="match status" value="1"/>
</dbReference>
<dbReference type="SUPFAM" id="SSF102114">
    <property type="entry name" value="Radical SAM enzymes"/>
    <property type="match status" value="1"/>
</dbReference>
<dbReference type="PROSITE" id="PS51918">
    <property type="entry name" value="RADICAL_SAM"/>
    <property type="match status" value="1"/>
</dbReference>
<gene>
    <name evidence="1" type="primary">bioB</name>
    <name type="ordered locus">ECIAI1_0810</name>
</gene>
<sequence>MAHRPRWTLSQVTELFEKPLLDLLFEAQQVHRQHFDPRQVQVSTLLSIKTGACPEDCKYCPQSSRYKTGLEAERLMEVEQVLESARKAKAAGSTRFCMGAAWKNPHERDMPYLEQMVQGVKAMGLEACMTLGTLSESQAQRLANAGLDYYNHNLDTSPEFYGNIITTRTYQERLDTLEKVRDAGIKVCSGGIVGLGETVKDRAGLLLQLANLPTPPESVPINMLVKVKGTPLADNDDVDAFDFIRTIAVARIMMPTSYVRLSAGREQMNEQTQAMCFMAGANSIFYGCKLLTTPNPEEDKDLQLFRKLGLNPQQTAVLAGDNEQQQRLEQALMTPDTDEYYNAAAL</sequence>
<protein>
    <recommendedName>
        <fullName evidence="1">Biotin synthase</fullName>
        <ecNumber evidence="1">2.8.1.6</ecNumber>
    </recommendedName>
</protein>
<accession>B7M747</accession>
<reference key="1">
    <citation type="journal article" date="2009" name="PLoS Genet.">
        <title>Organised genome dynamics in the Escherichia coli species results in highly diverse adaptive paths.</title>
        <authorList>
            <person name="Touchon M."/>
            <person name="Hoede C."/>
            <person name="Tenaillon O."/>
            <person name="Barbe V."/>
            <person name="Baeriswyl S."/>
            <person name="Bidet P."/>
            <person name="Bingen E."/>
            <person name="Bonacorsi S."/>
            <person name="Bouchier C."/>
            <person name="Bouvet O."/>
            <person name="Calteau A."/>
            <person name="Chiapello H."/>
            <person name="Clermont O."/>
            <person name="Cruveiller S."/>
            <person name="Danchin A."/>
            <person name="Diard M."/>
            <person name="Dossat C."/>
            <person name="Karoui M.E."/>
            <person name="Frapy E."/>
            <person name="Garry L."/>
            <person name="Ghigo J.M."/>
            <person name="Gilles A.M."/>
            <person name="Johnson J."/>
            <person name="Le Bouguenec C."/>
            <person name="Lescat M."/>
            <person name="Mangenot S."/>
            <person name="Martinez-Jehanne V."/>
            <person name="Matic I."/>
            <person name="Nassif X."/>
            <person name="Oztas S."/>
            <person name="Petit M.A."/>
            <person name="Pichon C."/>
            <person name="Rouy Z."/>
            <person name="Ruf C.S."/>
            <person name="Schneider D."/>
            <person name="Tourret J."/>
            <person name="Vacherie B."/>
            <person name="Vallenet D."/>
            <person name="Medigue C."/>
            <person name="Rocha E.P.C."/>
            <person name="Denamur E."/>
        </authorList>
    </citation>
    <scope>NUCLEOTIDE SEQUENCE [LARGE SCALE GENOMIC DNA]</scope>
    <source>
        <strain>IAI1</strain>
    </source>
</reference>